<dbReference type="EC" id="2.8.1.10" evidence="1"/>
<dbReference type="EMBL" id="AE009442">
    <property type="protein sequence ID" value="AAO29709.1"/>
    <property type="status" value="ALT_INIT"/>
    <property type="molecule type" value="Genomic_DNA"/>
</dbReference>
<dbReference type="RefSeq" id="WP_004090471.1">
    <property type="nucleotide sequence ID" value="NC_004556.1"/>
</dbReference>
<dbReference type="SMR" id="Q87AE8"/>
<dbReference type="KEGG" id="xft:PD_1877"/>
<dbReference type="HOGENOM" id="CLU_062233_1_0_6"/>
<dbReference type="UniPathway" id="UPA00060"/>
<dbReference type="Proteomes" id="UP000002516">
    <property type="component" value="Chromosome"/>
</dbReference>
<dbReference type="GO" id="GO:0005737">
    <property type="term" value="C:cytoplasm"/>
    <property type="evidence" value="ECO:0007669"/>
    <property type="project" value="UniProtKB-SubCell"/>
</dbReference>
<dbReference type="GO" id="GO:1990107">
    <property type="term" value="F:thiazole synthase activity"/>
    <property type="evidence" value="ECO:0007669"/>
    <property type="project" value="UniProtKB-EC"/>
</dbReference>
<dbReference type="GO" id="GO:0009229">
    <property type="term" value="P:thiamine diphosphate biosynthetic process"/>
    <property type="evidence" value="ECO:0007669"/>
    <property type="project" value="UniProtKB-UniRule"/>
</dbReference>
<dbReference type="CDD" id="cd04728">
    <property type="entry name" value="ThiG"/>
    <property type="match status" value="1"/>
</dbReference>
<dbReference type="Gene3D" id="3.20.20.70">
    <property type="entry name" value="Aldolase class I"/>
    <property type="match status" value="1"/>
</dbReference>
<dbReference type="HAMAP" id="MF_00443">
    <property type="entry name" value="ThiG"/>
    <property type="match status" value="1"/>
</dbReference>
<dbReference type="InterPro" id="IPR013785">
    <property type="entry name" value="Aldolase_TIM"/>
</dbReference>
<dbReference type="InterPro" id="IPR033983">
    <property type="entry name" value="Thiazole_synthase_ThiG"/>
</dbReference>
<dbReference type="InterPro" id="IPR008867">
    <property type="entry name" value="ThiG"/>
</dbReference>
<dbReference type="PANTHER" id="PTHR34266">
    <property type="entry name" value="THIAZOLE SYNTHASE"/>
    <property type="match status" value="1"/>
</dbReference>
<dbReference type="PANTHER" id="PTHR34266:SF2">
    <property type="entry name" value="THIAZOLE SYNTHASE"/>
    <property type="match status" value="1"/>
</dbReference>
<dbReference type="Pfam" id="PF05690">
    <property type="entry name" value="ThiG"/>
    <property type="match status" value="1"/>
</dbReference>
<dbReference type="SUPFAM" id="SSF110399">
    <property type="entry name" value="ThiG-like"/>
    <property type="match status" value="1"/>
</dbReference>
<reference key="1">
    <citation type="journal article" date="2003" name="J. Bacteriol.">
        <title>Comparative analyses of the complete genome sequences of Pierce's disease and citrus variegated chlorosis strains of Xylella fastidiosa.</title>
        <authorList>
            <person name="Van Sluys M.A."/>
            <person name="de Oliveira M.C."/>
            <person name="Monteiro-Vitorello C.B."/>
            <person name="Miyaki C.Y."/>
            <person name="Furlan L.R."/>
            <person name="Camargo L.E.A."/>
            <person name="da Silva A.C.R."/>
            <person name="Moon D.H."/>
            <person name="Takita M.A."/>
            <person name="Lemos E.G.M."/>
            <person name="Machado M.A."/>
            <person name="Ferro M.I.T."/>
            <person name="da Silva F.R."/>
            <person name="Goldman M.H.S."/>
            <person name="Goldman G.H."/>
            <person name="Lemos M.V.F."/>
            <person name="El-Dorry H."/>
            <person name="Tsai S.M."/>
            <person name="Carrer H."/>
            <person name="Carraro D.M."/>
            <person name="de Oliveira R.C."/>
            <person name="Nunes L.R."/>
            <person name="Siqueira W.J."/>
            <person name="Coutinho L.L."/>
            <person name="Kimura E.T."/>
            <person name="Ferro E.S."/>
            <person name="Harakava R."/>
            <person name="Kuramae E.E."/>
            <person name="Marino C.L."/>
            <person name="Giglioti E."/>
            <person name="Abreu I.L."/>
            <person name="Alves L.M.C."/>
            <person name="do Amaral A.M."/>
            <person name="Baia G.S."/>
            <person name="Blanco S.R."/>
            <person name="Brito M.S."/>
            <person name="Cannavan F.S."/>
            <person name="Celestino A.V."/>
            <person name="da Cunha A.F."/>
            <person name="Fenille R.C."/>
            <person name="Ferro J.A."/>
            <person name="Formighieri E.F."/>
            <person name="Kishi L.T."/>
            <person name="Leoni S.G."/>
            <person name="Oliveira A.R."/>
            <person name="Rosa V.E. Jr."/>
            <person name="Sassaki F.T."/>
            <person name="Sena J.A.D."/>
            <person name="de Souza A.A."/>
            <person name="Truffi D."/>
            <person name="Tsukumo F."/>
            <person name="Yanai G.M."/>
            <person name="Zaros L.G."/>
            <person name="Civerolo E.L."/>
            <person name="Simpson A.J.G."/>
            <person name="Almeida N.F. Jr."/>
            <person name="Setubal J.C."/>
            <person name="Kitajima J.P."/>
        </authorList>
    </citation>
    <scope>NUCLEOTIDE SEQUENCE [LARGE SCALE GENOMIC DNA]</scope>
    <source>
        <strain>Temecula1 / ATCC 700964</strain>
    </source>
</reference>
<keyword id="KW-0963">Cytoplasm</keyword>
<keyword id="KW-1185">Reference proteome</keyword>
<keyword id="KW-0704">Schiff base</keyword>
<keyword id="KW-0784">Thiamine biosynthesis</keyword>
<keyword id="KW-0808">Transferase</keyword>
<accession>Q87AE8</accession>
<gene>
    <name evidence="1" type="primary">thiG</name>
    <name type="ordered locus">PD_1877</name>
</gene>
<evidence type="ECO:0000255" key="1">
    <source>
        <dbReference type="HAMAP-Rule" id="MF_00443"/>
    </source>
</evidence>
<evidence type="ECO:0000305" key="2"/>
<feature type="chain" id="PRO_0000162881" description="Thiazole synthase">
    <location>
        <begin position="1"/>
        <end position="264"/>
    </location>
</feature>
<feature type="active site" description="Schiff-base intermediate with DXP" evidence="1">
    <location>
        <position position="106"/>
    </location>
</feature>
<feature type="binding site" evidence="1">
    <location>
        <position position="167"/>
    </location>
    <ligand>
        <name>1-deoxy-D-xylulose 5-phosphate</name>
        <dbReference type="ChEBI" id="CHEBI:57792"/>
    </ligand>
</feature>
<feature type="binding site" evidence="1">
    <location>
        <begin position="193"/>
        <end position="194"/>
    </location>
    <ligand>
        <name>1-deoxy-D-xylulose 5-phosphate</name>
        <dbReference type="ChEBI" id="CHEBI:57792"/>
    </ligand>
</feature>
<feature type="binding site" evidence="1">
    <location>
        <begin position="215"/>
        <end position="216"/>
    </location>
    <ligand>
        <name>1-deoxy-D-xylulose 5-phosphate</name>
        <dbReference type="ChEBI" id="CHEBI:57792"/>
    </ligand>
</feature>
<proteinExistence type="inferred from homology"/>
<comment type="function">
    <text evidence="1">Catalyzes the rearrangement of 1-deoxy-D-xylulose 5-phosphate (DXP) to produce the thiazole phosphate moiety of thiamine. Sulfur is provided by the thiocarboxylate moiety of the carrier protein ThiS. In vitro, sulfur can be provided by H(2)S.</text>
</comment>
<comment type="catalytic activity">
    <reaction evidence="1">
        <text>[ThiS sulfur-carrier protein]-C-terminal-Gly-aminoethanethioate + 2-iminoacetate + 1-deoxy-D-xylulose 5-phosphate = [ThiS sulfur-carrier protein]-C-terminal Gly-Gly + 2-[(2R,5Z)-2-carboxy-4-methylthiazol-5(2H)-ylidene]ethyl phosphate + 2 H2O + H(+)</text>
        <dbReference type="Rhea" id="RHEA:26297"/>
        <dbReference type="Rhea" id="RHEA-COMP:12909"/>
        <dbReference type="Rhea" id="RHEA-COMP:19908"/>
        <dbReference type="ChEBI" id="CHEBI:15377"/>
        <dbReference type="ChEBI" id="CHEBI:15378"/>
        <dbReference type="ChEBI" id="CHEBI:57792"/>
        <dbReference type="ChEBI" id="CHEBI:62899"/>
        <dbReference type="ChEBI" id="CHEBI:77846"/>
        <dbReference type="ChEBI" id="CHEBI:90778"/>
        <dbReference type="ChEBI" id="CHEBI:232372"/>
        <dbReference type="EC" id="2.8.1.10"/>
    </reaction>
</comment>
<comment type="pathway">
    <text evidence="1">Cofactor biosynthesis; thiamine diphosphate biosynthesis.</text>
</comment>
<comment type="subunit">
    <text evidence="1">Homotetramer. Forms heterodimers with either ThiH or ThiS.</text>
</comment>
<comment type="subcellular location">
    <subcellularLocation>
        <location evidence="1">Cytoplasm</location>
    </subcellularLocation>
</comment>
<comment type="similarity">
    <text evidence="1">Belongs to the ThiG family.</text>
</comment>
<comment type="sequence caution" evidence="2">
    <conflict type="erroneous initiation">
        <sequence resource="EMBL-CDS" id="AAO29709"/>
    </conflict>
</comment>
<name>THIG_XYLFT</name>
<sequence length="264" mass="28087">MNNFASNDPLVIAGTVYSSRLLTGTGKFKDLDETRLATEAAGSQIVTVAIRRVNIGQDPHQPNLLNVLSPDRYAILPNTAGCYTAEDAVRTCRLARELLDGHRLTKLEVLGDKKTLYPDVVQTLKAAEQLVAEDFQVMVYTSDDPILAKRLEEIGCVAVMPLAAPIGSGLGVQNRYNLLEIIENAQVPIIVDAGVGTASDAAIAMELGCDAVLMNTAIAGARDPVLMASAMRKAVEAGREAFLAGRIPRKRYAAASSPVEGLVG</sequence>
<protein>
    <recommendedName>
        <fullName evidence="1">Thiazole synthase</fullName>
        <ecNumber evidence="1">2.8.1.10</ecNumber>
    </recommendedName>
</protein>
<organism>
    <name type="scientific">Xylella fastidiosa (strain Temecula1 / ATCC 700964)</name>
    <dbReference type="NCBI Taxonomy" id="183190"/>
    <lineage>
        <taxon>Bacteria</taxon>
        <taxon>Pseudomonadati</taxon>
        <taxon>Pseudomonadota</taxon>
        <taxon>Gammaproteobacteria</taxon>
        <taxon>Lysobacterales</taxon>
        <taxon>Lysobacteraceae</taxon>
        <taxon>Xylella</taxon>
    </lineage>
</organism>